<organism>
    <name type="scientific">Homo sapiens</name>
    <name type="common">Human</name>
    <dbReference type="NCBI Taxonomy" id="9606"/>
    <lineage>
        <taxon>Eukaryota</taxon>
        <taxon>Metazoa</taxon>
        <taxon>Chordata</taxon>
        <taxon>Craniata</taxon>
        <taxon>Vertebrata</taxon>
        <taxon>Euteleostomi</taxon>
        <taxon>Mammalia</taxon>
        <taxon>Eutheria</taxon>
        <taxon>Euarchontoglires</taxon>
        <taxon>Primates</taxon>
        <taxon>Haplorrhini</taxon>
        <taxon>Catarrhini</taxon>
        <taxon>Hominidae</taxon>
        <taxon>Homo</taxon>
    </lineage>
</organism>
<feature type="chain" id="PRO_0000246773" description="SH2 domain-containing adapter protein D">
    <location>
        <begin position="1"/>
        <end position="340"/>
    </location>
</feature>
<feature type="domain" description="SH2" evidence="2">
    <location>
        <begin position="240"/>
        <end position="335"/>
    </location>
</feature>
<feature type="region of interest" description="Disordered" evidence="3">
    <location>
        <begin position="1"/>
        <end position="77"/>
    </location>
</feature>
<feature type="region of interest" description="Disordered" evidence="3">
    <location>
        <begin position="94"/>
        <end position="186"/>
    </location>
</feature>
<feature type="region of interest" description="Disordered" evidence="3">
    <location>
        <begin position="198"/>
        <end position="230"/>
    </location>
</feature>
<feature type="compositionally biased region" description="Acidic residues" evidence="3">
    <location>
        <begin position="98"/>
        <end position="108"/>
    </location>
</feature>
<feature type="compositionally biased region" description="Basic and acidic residues" evidence="3">
    <location>
        <begin position="171"/>
        <end position="186"/>
    </location>
</feature>
<feature type="sequence variant" id="VAR_027043" description="In dbSNP:rs2287714.">
    <original>G</original>
    <variation>S</variation>
    <location>
        <position position="138"/>
    </location>
</feature>
<feature type="sequence variant" id="VAR_027044" description="In dbSNP:rs888930." evidence="4">
    <original>N</original>
    <variation>S</variation>
    <location>
        <position position="270"/>
    </location>
</feature>
<feature type="sequence conflict" description="In Ref. 1; BAB70981." evidence="5" ref="1">
    <original>M</original>
    <variation>V</variation>
    <location>
        <position position="170"/>
    </location>
</feature>
<protein>
    <recommendedName>
        <fullName>SH2 domain-containing adapter protein D</fullName>
    </recommendedName>
</protein>
<name>SHD_HUMAN</name>
<gene>
    <name type="primary">SHD</name>
</gene>
<comment type="function">
    <text evidence="1">May function as an adapter protein.</text>
</comment>
<comment type="interaction">
    <interactant intactId="EBI-4402781">
        <id>Q96IW2</id>
    </interactant>
    <interactant intactId="EBI-1039152">
        <id>P08581</id>
        <label>MET</label>
    </interactant>
    <organismsDiffer>false</organismsDiffer>
    <experiments>2</experiments>
</comment>
<comment type="interaction">
    <interactant intactId="EBI-4402781">
        <id>Q96IW2</id>
    </interactant>
    <interactant intactId="EBI-713635">
        <id>O43639</id>
        <label>NCK2</label>
    </interactant>
    <organismsDiffer>false</organismsDiffer>
    <experiments>3</experiments>
</comment>
<comment type="PTM">
    <text evidence="1">Tyrosine phosphorylated by ABL.</text>
</comment>
<proteinExistence type="evidence at protein level"/>
<reference key="1">
    <citation type="journal article" date="2004" name="Nat. Genet.">
        <title>Complete sequencing and characterization of 21,243 full-length human cDNAs.</title>
        <authorList>
            <person name="Ota T."/>
            <person name="Suzuki Y."/>
            <person name="Nishikawa T."/>
            <person name="Otsuki T."/>
            <person name="Sugiyama T."/>
            <person name="Irie R."/>
            <person name="Wakamatsu A."/>
            <person name="Hayashi K."/>
            <person name="Sato H."/>
            <person name="Nagai K."/>
            <person name="Kimura K."/>
            <person name="Makita H."/>
            <person name="Sekine M."/>
            <person name="Obayashi M."/>
            <person name="Nishi T."/>
            <person name="Shibahara T."/>
            <person name="Tanaka T."/>
            <person name="Ishii S."/>
            <person name="Yamamoto J."/>
            <person name="Saito K."/>
            <person name="Kawai Y."/>
            <person name="Isono Y."/>
            <person name="Nakamura Y."/>
            <person name="Nagahari K."/>
            <person name="Murakami K."/>
            <person name="Yasuda T."/>
            <person name="Iwayanagi T."/>
            <person name="Wagatsuma M."/>
            <person name="Shiratori A."/>
            <person name="Sudo H."/>
            <person name="Hosoiri T."/>
            <person name="Kaku Y."/>
            <person name="Kodaira H."/>
            <person name="Kondo H."/>
            <person name="Sugawara M."/>
            <person name="Takahashi M."/>
            <person name="Kanda K."/>
            <person name="Yokoi T."/>
            <person name="Furuya T."/>
            <person name="Kikkawa E."/>
            <person name="Omura Y."/>
            <person name="Abe K."/>
            <person name="Kamihara K."/>
            <person name="Katsuta N."/>
            <person name="Sato K."/>
            <person name="Tanikawa M."/>
            <person name="Yamazaki M."/>
            <person name="Ninomiya K."/>
            <person name="Ishibashi T."/>
            <person name="Yamashita H."/>
            <person name="Murakawa K."/>
            <person name="Fujimori K."/>
            <person name="Tanai H."/>
            <person name="Kimata M."/>
            <person name="Watanabe M."/>
            <person name="Hiraoka S."/>
            <person name="Chiba Y."/>
            <person name="Ishida S."/>
            <person name="Ono Y."/>
            <person name="Takiguchi S."/>
            <person name="Watanabe S."/>
            <person name="Yosida M."/>
            <person name="Hotuta T."/>
            <person name="Kusano J."/>
            <person name="Kanehori K."/>
            <person name="Takahashi-Fujii A."/>
            <person name="Hara H."/>
            <person name="Tanase T.-O."/>
            <person name="Nomura Y."/>
            <person name="Togiya S."/>
            <person name="Komai F."/>
            <person name="Hara R."/>
            <person name="Takeuchi K."/>
            <person name="Arita M."/>
            <person name="Imose N."/>
            <person name="Musashino K."/>
            <person name="Yuuki H."/>
            <person name="Oshima A."/>
            <person name="Sasaki N."/>
            <person name="Aotsuka S."/>
            <person name="Yoshikawa Y."/>
            <person name="Matsunawa H."/>
            <person name="Ichihara T."/>
            <person name="Shiohata N."/>
            <person name="Sano S."/>
            <person name="Moriya S."/>
            <person name="Momiyama H."/>
            <person name="Satoh N."/>
            <person name="Takami S."/>
            <person name="Terashima Y."/>
            <person name="Suzuki O."/>
            <person name="Nakagawa S."/>
            <person name="Senoh A."/>
            <person name="Mizoguchi H."/>
            <person name="Goto Y."/>
            <person name="Shimizu F."/>
            <person name="Wakebe H."/>
            <person name="Hishigaki H."/>
            <person name="Watanabe T."/>
            <person name="Sugiyama A."/>
            <person name="Takemoto M."/>
            <person name="Kawakami B."/>
            <person name="Yamazaki M."/>
            <person name="Watanabe K."/>
            <person name="Kumagai A."/>
            <person name="Itakura S."/>
            <person name="Fukuzumi Y."/>
            <person name="Fujimori Y."/>
            <person name="Komiyama M."/>
            <person name="Tashiro H."/>
            <person name="Tanigami A."/>
            <person name="Fujiwara T."/>
            <person name="Ono T."/>
            <person name="Yamada K."/>
            <person name="Fujii Y."/>
            <person name="Ozaki K."/>
            <person name="Hirao M."/>
            <person name="Ohmori Y."/>
            <person name="Kawabata A."/>
            <person name="Hikiji T."/>
            <person name="Kobatake N."/>
            <person name="Inagaki H."/>
            <person name="Ikema Y."/>
            <person name="Okamoto S."/>
            <person name="Okitani R."/>
            <person name="Kawakami T."/>
            <person name="Noguchi S."/>
            <person name="Itoh T."/>
            <person name="Shigeta K."/>
            <person name="Senba T."/>
            <person name="Matsumura K."/>
            <person name="Nakajima Y."/>
            <person name="Mizuno T."/>
            <person name="Morinaga M."/>
            <person name="Sasaki M."/>
            <person name="Togashi T."/>
            <person name="Oyama M."/>
            <person name="Hata H."/>
            <person name="Watanabe M."/>
            <person name="Komatsu T."/>
            <person name="Mizushima-Sugano J."/>
            <person name="Satoh T."/>
            <person name="Shirai Y."/>
            <person name="Takahashi Y."/>
            <person name="Nakagawa K."/>
            <person name="Okumura K."/>
            <person name="Nagase T."/>
            <person name="Nomura N."/>
            <person name="Kikuchi H."/>
            <person name="Masuho Y."/>
            <person name="Yamashita R."/>
            <person name="Nakai K."/>
            <person name="Yada T."/>
            <person name="Nakamura Y."/>
            <person name="Ohara O."/>
            <person name="Isogai T."/>
            <person name="Sugano S."/>
        </authorList>
    </citation>
    <scope>NUCLEOTIDE SEQUENCE [LARGE SCALE MRNA]</scope>
    <scope>VARIANT SER-270</scope>
    <source>
        <tissue>Neuroblastoma</tissue>
    </source>
</reference>
<reference key="2">
    <citation type="journal article" date="2004" name="Genome Res.">
        <title>The status, quality, and expansion of the NIH full-length cDNA project: the Mammalian Gene Collection (MGC).</title>
        <authorList>
            <consortium name="The MGC Project Team"/>
        </authorList>
    </citation>
    <scope>NUCLEOTIDE SEQUENCE [LARGE SCALE MRNA]</scope>
    <source>
        <tissue>Neuroblastoma</tissue>
    </source>
</reference>
<keyword id="KW-0597">Phosphoprotein</keyword>
<keyword id="KW-1267">Proteomics identification</keyword>
<keyword id="KW-1185">Reference proteome</keyword>
<keyword id="KW-0727">SH2 domain</keyword>
<accession>Q96IW2</accession>
<accession>Q96NC2</accession>
<evidence type="ECO:0000250" key="1"/>
<evidence type="ECO:0000255" key="2">
    <source>
        <dbReference type="PROSITE-ProRule" id="PRU00191"/>
    </source>
</evidence>
<evidence type="ECO:0000256" key="3">
    <source>
        <dbReference type="SAM" id="MobiDB-lite"/>
    </source>
</evidence>
<evidence type="ECO:0000269" key="4">
    <source>
    </source>
</evidence>
<evidence type="ECO:0000305" key="5"/>
<dbReference type="EMBL" id="AK055673">
    <property type="protein sequence ID" value="BAB70981.1"/>
    <property type="molecule type" value="mRNA"/>
</dbReference>
<dbReference type="EMBL" id="BC007206">
    <property type="protein sequence ID" value="AAH07206.1"/>
    <property type="molecule type" value="mRNA"/>
</dbReference>
<dbReference type="CCDS" id="CCDS12125.1"/>
<dbReference type="RefSeq" id="NP_001358940.1">
    <property type="nucleotide sequence ID" value="NM_001372011.1"/>
</dbReference>
<dbReference type="RefSeq" id="NP_064594.3">
    <property type="nucleotide sequence ID" value="NM_020209.3"/>
</dbReference>
<dbReference type="SMR" id="Q96IW2"/>
<dbReference type="BioGRID" id="121283">
    <property type="interactions" value="17"/>
</dbReference>
<dbReference type="FunCoup" id="Q96IW2">
    <property type="interactions" value="471"/>
</dbReference>
<dbReference type="IntAct" id="Q96IW2">
    <property type="interactions" value="12"/>
</dbReference>
<dbReference type="STRING" id="9606.ENSP00000446058"/>
<dbReference type="GlyGen" id="Q96IW2">
    <property type="glycosylation" value="1 site"/>
</dbReference>
<dbReference type="iPTMnet" id="Q96IW2"/>
<dbReference type="PhosphoSitePlus" id="Q96IW2"/>
<dbReference type="BioMuta" id="SHD"/>
<dbReference type="DMDM" id="74751948"/>
<dbReference type="MassIVE" id="Q96IW2"/>
<dbReference type="PaxDb" id="9606-ENSP00000446058"/>
<dbReference type="PeptideAtlas" id="Q96IW2"/>
<dbReference type="ProteomicsDB" id="76863"/>
<dbReference type="Antibodypedia" id="2789">
    <property type="antibodies" value="87 antibodies from 22 providers"/>
</dbReference>
<dbReference type="DNASU" id="56961"/>
<dbReference type="Ensembl" id="ENST00000543264.7">
    <property type="protein sequence ID" value="ENSP00000446058.1"/>
    <property type="gene ID" value="ENSG00000105251.11"/>
</dbReference>
<dbReference type="GeneID" id="56961"/>
<dbReference type="KEGG" id="hsa:56961"/>
<dbReference type="MANE-Select" id="ENST00000543264.7">
    <property type="protein sequence ID" value="ENSP00000446058.1"/>
    <property type="RefSeq nucleotide sequence ID" value="NM_020209.4"/>
    <property type="RefSeq protein sequence ID" value="NP_064594.3"/>
</dbReference>
<dbReference type="UCSC" id="uc002lzw.3">
    <property type="organism name" value="human"/>
</dbReference>
<dbReference type="AGR" id="HGNC:30633"/>
<dbReference type="CTD" id="56961"/>
<dbReference type="DisGeNET" id="56961"/>
<dbReference type="GeneCards" id="SHD"/>
<dbReference type="HGNC" id="HGNC:30633">
    <property type="gene designation" value="SHD"/>
</dbReference>
<dbReference type="HPA" id="ENSG00000105251">
    <property type="expression patterns" value="Group enriched (brain, heart muscle)"/>
</dbReference>
<dbReference type="MIM" id="610481">
    <property type="type" value="gene"/>
</dbReference>
<dbReference type="neXtProt" id="NX_Q96IW2"/>
<dbReference type="OpenTargets" id="ENSG00000105251"/>
<dbReference type="PharmGKB" id="PA142670918"/>
<dbReference type="VEuPathDB" id="HostDB:ENSG00000105251"/>
<dbReference type="eggNOG" id="ENOG502QUXW">
    <property type="taxonomic scope" value="Eukaryota"/>
</dbReference>
<dbReference type="GeneTree" id="ENSGT00940000159004"/>
<dbReference type="HOGENOM" id="CLU_029444_0_1_1"/>
<dbReference type="InParanoid" id="Q96IW2"/>
<dbReference type="OMA" id="AKEFRRP"/>
<dbReference type="OrthoDB" id="5914531at2759"/>
<dbReference type="PAN-GO" id="Q96IW2">
    <property type="GO annotations" value="1 GO annotation based on evolutionary models"/>
</dbReference>
<dbReference type="PhylomeDB" id="Q96IW2"/>
<dbReference type="TreeFam" id="TF325799"/>
<dbReference type="PathwayCommons" id="Q96IW2"/>
<dbReference type="SignaLink" id="Q96IW2"/>
<dbReference type="BioGRID-ORCS" id="56961">
    <property type="hits" value="14 hits in 1147 CRISPR screens"/>
</dbReference>
<dbReference type="ChiTaRS" id="SHD">
    <property type="organism name" value="human"/>
</dbReference>
<dbReference type="GenomeRNAi" id="56961"/>
<dbReference type="Pharos" id="Q96IW2">
    <property type="development level" value="Tbio"/>
</dbReference>
<dbReference type="PRO" id="PR:Q96IW2"/>
<dbReference type="Proteomes" id="UP000005640">
    <property type="component" value="Chromosome 19"/>
</dbReference>
<dbReference type="RNAct" id="Q96IW2">
    <property type="molecule type" value="protein"/>
</dbReference>
<dbReference type="Bgee" id="ENSG00000105251">
    <property type="expression patterns" value="Expressed in mucosa of transverse colon and 121 other cell types or tissues"/>
</dbReference>
<dbReference type="ExpressionAtlas" id="Q96IW2">
    <property type="expression patterns" value="baseline and differential"/>
</dbReference>
<dbReference type="GO" id="GO:0001784">
    <property type="term" value="F:phosphotyrosine residue binding"/>
    <property type="evidence" value="ECO:0000318"/>
    <property type="project" value="GO_Central"/>
</dbReference>
<dbReference type="CDD" id="cd10390">
    <property type="entry name" value="SH2_SHD"/>
    <property type="match status" value="1"/>
</dbReference>
<dbReference type="FunFam" id="3.30.505.10:FF:000058">
    <property type="entry name" value="SH2 domain-containing adapter protein D"/>
    <property type="match status" value="1"/>
</dbReference>
<dbReference type="Gene3D" id="3.30.505.10">
    <property type="entry name" value="SH2 domain"/>
    <property type="match status" value="1"/>
</dbReference>
<dbReference type="InterPro" id="IPR000980">
    <property type="entry name" value="SH2"/>
</dbReference>
<dbReference type="InterPro" id="IPR036860">
    <property type="entry name" value="SH2_dom_sf"/>
</dbReference>
<dbReference type="InterPro" id="IPR051846">
    <property type="entry name" value="SH2_domain_adapters"/>
</dbReference>
<dbReference type="InterPro" id="IPR035046">
    <property type="entry name" value="SHD_SH2"/>
</dbReference>
<dbReference type="PANTHER" id="PTHR15127">
    <property type="entry name" value="HEAVYWEIGHT, ISOFORM A"/>
    <property type="match status" value="1"/>
</dbReference>
<dbReference type="PANTHER" id="PTHR15127:SF33">
    <property type="entry name" value="SH2 DOMAIN-CONTAINING ADAPTER PROTEIN D"/>
    <property type="match status" value="1"/>
</dbReference>
<dbReference type="Pfam" id="PF00017">
    <property type="entry name" value="SH2"/>
    <property type="match status" value="1"/>
</dbReference>
<dbReference type="PRINTS" id="PR00401">
    <property type="entry name" value="SH2DOMAIN"/>
</dbReference>
<dbReference type="SMART" id="SM00252">
    <property type="entry name" value="SH2"/>
    <property type="match status" value="1"/>
</dbReference>
<dbReference type="SUPFAM" id="SSF55550">
    <property type="entry name" value="SH2 domain"/>
    <property type="match status" value="1"/>
</dbReference>
<dbReference type="PROSITE" id="PS50001">
    <property type="entry name" value="SH2"/>
    <property type="match status" value="1"/>
</dbReference>
<sequence>MAKWLRDYLSFGGRRPPPQPPTPDYTESDILRAYRAQKNLDFEDPYEDAESRLEPDPAGPGDSKNPGDAKYGSPKHRLIKVEAADMARAKALLGGPGEELEADTEYLDPFDAQPHPAPPDDGYMEPYDAQWVMSELPGRGVQLYDTPYEEQDPETADGPPSGQKPRQSRMPQEDERPADEYDQPWEWKKDHISRAFAVQFDSPEWERTPGSAKELRRPPPRSPQPAERVDPALPLEKQPWFHGPLNRADAESLLSLCKEGSYLVRLSETNPQDCSLSLRSSQGFLHLKFARTRENQVVLGQHSGPFPSVPELVLHYSSRPLPVQGAEHLALLYPVVTQTP</sequence>